<organism>
    <name type="scientific">Buchnera aphidicola subsp. Acyrthosiphon pisum (strain APS)</name>
    <name type="common">Acyrthosiphon pisum symbiotic bacterium</name>
    <dbReference type="NCBI Taxonomy" id="107806"/>
    <lineage>
        <taxon>Bacteria</taxon>
        <taxon>Pseudomonadati</taxon>
        <taxon>Pseudomonadota</taxon>
        <taxon>Gammaproteobacteria</taxon>
        <taxon>Enterobacterales</taxon>
        <taxon>Erwiniaceae</taxon>
        <taxon>Buchnera</taxon>
    </lineage>
</organism>
<gene>
    <name evidence="1" type="primary">dnaG</name>
    <name type="ordered locus">BU056</name>
</gene>
<evidence type="ECO:0000255" key="1">
    <source>
        <dbReference type="HAMAP-Rule" id="MF_00974"/>
    </source>
</evidence>
<dbReference type="EC" id="2.7.7.101" evidence="1"/>
<dbReference type="EMBL" id="BA000003">
    <property type="protein sequence ID" value="BAB12779.1"/>
    <property type="molecule type" value="Genomic_DNA"/>
</dbReference>
<dbReference type="RefSeq" id="NP_239893.1">
    <property type="nucleotide sequence ID" value="NC_002528.1"/>
</dbReference>
<dbReference type="RefSeq" id="WP_010895920.1">
    <property type="nucleotide sequence ID" value="NC_002528.1"/>
</dbReference>
<dbReference type="SMR" id="P57164"/>
<dbReference type="STRING" id="563178.BUAP5A_055"/>
<dbReference type="EnsemblBacteria" id="BAB12779">
    <property type="protein sequence ID" value="BAB12779"/>
    <property type="gene ID" value="BAB12779"/>
</dbReference>
<dbReference type="KEGG" id="buc:BU056"/>
<dbReference type="PATRIC" id="fig|107806.10.peg.65"/>
<dbReference type="eggNOG" id="COG0358">
    <property type="taxonomic scope" value="Bacteria"/>
</dbReference>
<dbReference type="HOGENOM" id="CLU_013501_5_1_6"/>
<dbReference type="Proteomes" id="UP000001806">
    <property type="component" value="Chromosome"/>
</dbReference>
<dbReference type="GO" id="GO:0005737">
    <property type="term" value="C:cytoplasm"/>
    <property type="evidence" value="ECO:0007669"/>
    <property type="project" value="TreeGrafter"/>
</dbReference>
<dbReference type="GO" id="GO:0000428">
    <property type="term" value="C:DNA-directed RNA polymerase complex"/>
    <property type="evidence" value="ECO:0007669"/>
    <property type="project" value="UniProtKB-KW"/>
</dbReference>
<dbReference type="GO" id="GO:1990077">
    <property type="term" value="C:primosome complex"/>
    <property type="evidence" value="ECO:0007669"/>
    <property type="project" value="UniProtKB-KW"/>
</dbReference>
<dbReference type="GO" id="GO:0003677">
    <property type="term" value="F:DNA binding"/>
    <property type="evidence" value="ECO:0007669"/>
    <property type="project" value="UniProtKB-KW"/>
</dbReference>
<dbReference type="GO" id="GO:0003899">
    <property type="term" value="F:DNA-directed RNA polymerase activity"/>
    <property type="evidence" value="ECO:0007669"/>
    <property type="project" value="InterPro"/>
</dbReference>
<dbReference type="GO" id="GO:0008270">
    <property type="term" value="F:zinc ion binding"/>
    <property type="evidence" value="ECO:0007669"/>
    <property type="project" value="UniProtKB-UniRule"/>
</dbReference>
<dbReference type="GO" id="GO:0006269">
    <property type="term" value="P:DNA replication, synthesis of primer"/>
    <property type="evidence" value="ECO:0007669"/>
    <property type="project" value="UniProtKB-UniRule"/>
</dbReference>
<dbReference type="CDD" id="cd03364">
    <property type="entry name" value="TOPRIM_DnaG_primases"/>
    <property type="match status" value="1"/>
</dbReference>
<dbReference type="FunFam" id="3.40.1360.10:FF:000002">
    <property type="entry name" value="DNA primase"/>
    <property type="match status" value="1"/>
</dbReference>
<dbReference type="FunFam" id="3.90.580.10:FF:000001">
    <property type="entry name" value="DNA primase"/>
    <property type="match status" value="1"/>
</dbReference>
<dbReference type="Gene3D" id="3.40.1360.10">
    <property type="match status" value="1"/>
</dbReference>
<dbReference type="Gene3D" id="3.90.980.10">
    <property type="entry name" value="DNA primase, catalytic core, N-terminal domain"/>
    <property type="match status" value="1"/>
</dbReference>
<dbReference type="Gene3D" id="1.10.860.10">
    <property type="entry name" value="DNAb Helicase, Chain A"/>
    <property type="match status" value="1"/>
</dbReference>
<dbReference type="Gene3D" id="1.20.50.20">
    <property type="entry name" value="DnaG, RNA polymerase domain, helical bundle"/>
    <property type="match status" value="1"/>
</dbReference>
<dbReference type="Gene3D" id="3.90.580.10">
    <property type="entry name" value="Zinc finger, CHC2-type domain"/>
    <property type="match status" value="1"/>
</dbReference>
<dbReference type="HAMAP" id="MF_00974">
    <property type="entry name" value="DNA_primase_DnaG"/>
    <property type="match status" value="1"/>
</dbReference>
<dbReference type="InterPro" id="IPR016136">
    <property type="entry name" value="DNA_helicase_N/primase_C"/>
</dbReference>
<dbReference type="InterPro" id="IPR037068">
    <property type="entry name" value="DNA_primase_core_N_sf"/>
</dbReference>
<dbReference type="InterPro" id="IPR019475">
    <property type="entry name" value="DNA_primase_DnaB-bd"/>
</dbReference>
<dbReference type="InterPro" id="IPR006295">
    <property type="entry name" value="DNA_primase_DnaG"/>
</dbReference>
<dbReference type="InterPro" id="IPR013173">
    <property type="entry name" value="DNA_primase_DnaG_DnaB-bd_dom"/>
</dbReference>
<dbReference type="InterPro" id="IPR036977">
    <property type="entry name" value="DNA_primase_Znf_CHC2"/>
</dbReference>
<dbReference type="InterPro" id="IPR030846">
    <property type="entry name" value="DnaG_bac"/>
</dbReference>
<dbReference type="InterPro" id="IPR013264">
    <property type="entry name" value="DNAG_N"/>
</dbReference>
<dbReference type="InterPro" id="IPR050219">
    <property type="entry name" value="DnaG_primase"/>
</dbReference>
<dbReference type="InterPro" id="IPR034151">
    <property type="entry name" value="TOPRIM_DnaG_bac"/>
</dbReference>
<dbReference type="InterPro" id="IPR006171">
    <property type="entry name" value="TOPRIM_dom"/>
</dbReference>
<dbReference type="InterPro" id="IPR002694">
    <property type="entry name" value="Znf_CHC2"/>
</dbReference>
<dbReference type="NCBIfam" id="TIGR01391">
    <property type="entry name" value="dnaG"/>
    <property type="match status" value="1"/>
</dbReference>
<dbReference type="PANTHER" id="PTHR30313">
    <property type="entry name" value="DNA PRIMASE"/>
    <property type="match status" value="1"/>
</dbReference>
<dbReference type="PANTHER" id="PTHR30313:SF2">
    <property type="entry name" value="DNA PRIMASE"/>
    <property type="match status" value="1"/>
</dbReference>
<dbReference type="Pfam" id="PF10410">
    <property type="entry name" value="DnaB_bind"/>
    <property type="match status" value="1"/>
</dbReference>
<dbReference type="Pfam" id="PF08278">
    <property type="entry name" value="DnaG_DnaB_bind"/>
    <property type="match status" value="1"/>
</dbReference>
<dbReference type="Pfam" id="PF08275">
    <property type="entry name" value="DNAG_N"/>
    <property type="match status" value="1"/>
</dbReference>
<dbReference type="Pfam" id="PF13155">
    <property type="entry name" value="Toprim_2"/>
    <property type="match status" value="1"/>
</dbReference>
<dbReference type="Pfam" id="PF01807">
    <property type="entry name" value="Zn_ribbon_DnaG"/>
    <property type="match status" value="1"/>
</dbReference>
<dbReference type="PIRSF" id="PIRSF002811">
    <property type="entry name" value="DnaG"/>
    <property type="match status" value="1"/>
</dbReference>
<dbReference type="SMART" id="SM00766">
    <property type="entry name" value="DnaG_DnaB_bind"/>
    <property type="match status" value="1"/>
</dbReference>
<dbReference type="SMART" id="SM00493">
    <property type="entry name" value="TOPRIM"/>
    <property type="match status" value="1"/>
</dbReference>
<dbReference type="SMART" id="SM00400">
    <property type="entry name" value="ZnF_CHCC"/>
    <property type="match status" value="1"/>
</dbReference>
<dbReference type="SUPFAM" id="SSF56731">
    <property type="entry name" value="DNA primase core"/>
    <property type="match status" value="1"/>
</dbReference>
<dbReference type="SUPFAM" id="SSF117023">
    <property type="entry name" value="DNA primase DnaG, C-terminal domain"/>
    <property type="match status" value="1"/>
</dbReference>
<dbReference type="SUPFAM" id="SSF57783">
    <property type="entry name" value="Zinc beta-ribbon"/>
    <property type="match status" value="1"/>
</dbReference>
<dbReference type="PROSITE" id="PS50880">
    <property type="entry name" value="TOPRIM"/>
    <property type="match status" value="1"/>
</dbReference>
<accession>P57164</accession>
<feature type="chain" id="PRO_0000180481" description="DNA primase">
    <location>
        <begin position="1"/>
        <end position="577"/>
    </location>
</feature>
<feature type="domain" description="Toprim" evidence="1">
    <location>
        <begin position="255"/>
        <end position="337"/>
    </location>
</feature>
<feature type="zinc finger region" description="CHC2-type" evidence="1">
    <location>
        <begin position="40"/>
        <end position="64"/>
    </location>
</feature>
<feature type="binding site" evidence="1">
    <location>
        <position position="261"/>
    </location>
    <ligand>
        <name>Mg(2+)</name>
        <dbReference type="ChEBI" id="CHEBI:18420"/>
        <label>1</label>
        <note>catalytic</note>
    </ligand>
</feature>
<feature type="binding site" evidence="1">
    <location>
        <position position="305"/>
    </location>
    <ligand>
        <name>Mg(2+)</name>
        <dbReference type="ChEBI" id="CHEBI:18420"/>
        <label>1</label>
        <note>catalytic</note>
    </ligand>
</feature>
<feature type="binding site" evidence="1">
    <location>
        <position position="305"/>
    </location>
    <ligand>
        <name>Mg(2+)</name>
        <dbReference type="ChEBI" id="CHEBI:18420"/>
        <label>2</label>
    </ligand>
</feature>
<feature type="binding site" evidence="1">
    <location>
        <position position="307"/>
    </location>
    <ligand>
        <name>Mg(2+)</name>
        <dbReference type="ChEBI" id="CHEBI:18420"/>
        <label>2</label>
    </ligand>
</feature>
<reference key="1">
    <citation type="journal article" date="2000" name="Nature">
        <title>Genome sequence of the endocellular bacterial symbiont of aphids Buchnera sp. APS.</title>
        <authorList>
            <person name="Shigenobu S."/>
            <person name="Watanabe H."/>
            <person name="Hattori M."/>
            <person name="Sakaki Y."/>
            <person name="Ishikawa H."/>
        </authorList>
    </citation>
    <scope>NUCLEOTIDE SEQUENCE [LARGE SCALE GENOMIC DNA]</scope>
    <source>
        <strain>APS</strain>
    </source>
</reference>
<name>DNAG_BUCAI</name>
<protein>
    <recommendedName>
        <fullName evidence="1">DNA primase</fullName>
        <ecNumber evidence="1">2.7.7.101</ecNumber>
    </recommendedName>
</protein>
<keyword id="KW-0235">DNA replication</keyword>
<keyword id="KW-0238">DNA-binding</keyword>
<keyword id="KW-0240">DNA-directed RNA polymerase</keyword>
<keyword id="KW-0460">Magnesium</keyword>
<keyword id="KW-0479">Metal-binding</keyword>
<keyword id="KW-0548">Nucleotidyltransferase</keyword>
<keyword id="KW-0639">Primosome</keyword>
<keyword id="KW-1185">Reference proteome</keyword>
<keyword id="KW-0804">Transcription</keyword>
<keyword id="KW-0808">Transferase</keyword>
<keyword id="KW-0862">Zinc</keyword>
<keyword id="KW-0863">Zinc-finger</keyword>
<proteinExistence type="inferred from homology"/>
<sequence>MSGKIPKYFITELLSRTNIIELINTRLELKKYGKNYQTNCPFHHDKTPSFTVSNEKQFYYCFGCNAHGNAIDFLIQYEHLSFIESIEELALIHGVKIPFENTVQNSIYVKKQKLYLLMEKICKLYKKNINVTHLANKYLARRGINQNMIDFFLIGFSSLKWNEFYKKINISKEFEQELLINNIIATDKNGYIYDRFQGRIIFPIQDNHGRIIGFGGRSLNDMSPKYLNSPETDIFYKRKQIYGLYQVIKKCSKPVYLLVVEGYIDVITLTQYNIDYAVSILGTSTTTEHIQLLFKNTDIIICCYDGDDAGKNAAWKTLKKALPYISDKKTLKFILLPNQEDPDTIIRKEGREKFQKRIDNAITMSKFFFKNILKNINLSSDDDKFHLSVHALPLINTISSDTIRIYLRQILARMIGILDDNQFEKFLYEKETKNTQKTYFQIKRTPMRTLIGLLVQNPSLAKLVPVTMKFKNLQIKGLSIFLEILQTCRDNPNIHTGQLLELYRNTTIINVLKILARWDHMIIQKETQNMFLDLLMNIHDKILEKRREYLIAKERKKGLQMNEKKEIWSINKKLSKR</sequence>
<comment type="function">
    <text evidence="1">RNA polymerase that catalyzes the synthesis of short RNA molecules used as primers for DNA polymerase during DNA replication.</text>
</comment>
<comment type="catalytic activity">
    <reaction evidence="1">
        <text>ssDNA + n NTP = ssDNA/pppN(pN)n-1 hybrid + (n-1) diphosphate.</text>
        <dbReference type="EC" id="2.7.7.101"/>
    </reaction>
</comment>
<comment type="cofactor">
    <cofactor evidence="1">
        <name>Zn(2+)</name>
        <dbReference type="ChEBI" id="CHEBI:29105"/>
    </cofactor>
    <text evidence="1">Binds 1 zinc ion per monomer.</text>
</comment>
<comment type="cofactor">
    <cofactor evidence="1">
        <name>Mg(2+)</name>
        <dbReference type="ChEBI" id="CHEBI:18420"/>
    </cofactor>
    <text evidence="1">Binds two Mg(2+) per subunit.</text>
</comment>
<comment type="subunit">
    <text evidence="1">Monomer. Interacts with DnaB.</text>
</comment>
<comment type="domain">
    <text evidence="1">Contains an N-terminal zinc-binding domain, a central core domain that contains the primase activity, and a C-terminal DnaB-binding domain.</text>
</comment>
<comment type="similarity">
    <text evidence="1">Belongs to the DnaG primase family.</text>
</comment>